<organism>
    <name type="scientific">Macaca mulatta</name>
    <name type="common">Rhesus macaque</name>
    <dbReference type="NCBI Taxonomy" id="9544"/>
    <lineage>
        <taxon>Eukaryota</taxon>
        <taxon>Metazoa</taxon>
        <taxon>Chordata</taxon>
        <taxon>Craniata</taxon>
        <taxon>Vertebrata</taxon>
        <taxon>Euteleostomi</taxon>
        <taxon>Mammalia</taxon>
        <taxon>Eutheria</taxon>
        <taxon>Euarchontoglires</taxon>
        <taxon>Primates</taxon>
        <taxon>Haplorrhini</taxon>
        <taxon>Catarrhini</taxon>
        <taxon>Cercopithecidae</taxon>
        <taxon>Cercopithecinae</taxon>
        <taxon>Macaca</taxon>
    </lineage>
</organism>
<evidence type="ECO:0000250" key="1">
    <source>
        <dbReference type="UniProtKB" id="Q96E66"/>
    </source>
</evidence>
<evidence type="ECO:0000250" key="2">
    <source>
        <dbReference type="UniProtKB" id="Q9DAK8"/>
    </source>
</evidence>
<evidence type="ECO:0000269" key="3">
    <source>
    </source>
</evidence>
<evidence type="ECO:0000303" key="4">
    <source>
    </source>
</evidence>
<evidence type="ECO:0000305" key="5"/>
<evidence type="ECO:0000312" key="6">
    <source>
        <dbReference type="EMBL" id="ACF40886.1"/>
    </source>
</evidence>
<feature type="chain" id="PRO_0000370741" description="Leucine-rich repeat-containing protein 51">
    <location>
        <begin position="1"/>
        <end position="192"/>
    </location>
</feature>
<feature type="repeat" description="LRR 1">
    <location>
        <begin position="49"/>
        <end position="71"/>
    </location>
</feature>
<feature type="repeat" description="LRR 2">
    <location>
        <begin position="80"/>
        <end position="101"/>
    </location>
</feature>
<feature type="repeat" description="LRR 3">
    <location>
        <begin position="103"/>
        <end position="124"/>
    </location>
</feature>
<feature type="domain" description="LRRCT">
    <location>
        <begin position="137"/>
        <end position="175"/>
    </location>
</feature>
<feature type="splice variant" id="VSP_053060" description="In isoform 2." evidence="4">
    <original>QYVLCTLPHITTFDFSGVTKADRTTAEVWKRMNIKPKKARIKQNTL</original>
    <variation>VEPGRPR</variation>
    <location>
        <begin position="147"/>
        <end position="192"/>
    </location>
</feature>
<sequence length="192" mass="22160">MNKRDYMNTSVQEPPLDYSFRSIHVIQDLVNEEPRTGLRPLKRSKSGKSLTQSLWLNNNVLNDLRDFNQVASQLLEHPENLAWIDLSFNDLTSIDPVLTTFFNLSVLYLHGNSIQHLGEVNKLAVLPRLRSLTLHGNPMEEEKGYRQYVLCTLPHITTFDFSGVTKADRTTAEVWKRMNIKPKKARIKQNTL</sequence>
<reference evidence="5 6" key="1">
    <citation type="journal article" date="2008" name="Nat. Genet.">
        <title>Mutations of LRTOMT, a fusion gene with alternative reading frames, cause nonsyndromic deafness in humans.</title>
        <authorList>
            <person name="Ahmed Z.M."/>
            <person name="Masmoudi S."/>
            <person name="Kalay E."/>
            <person name="Belyantseva I.A."/>
            <person name="Mosrati M.A."/>
            <person name="Collin R.W.J."/>
            <person name="Riazuddin S."/>
            <person name="Hmani-Aifa M."/>
            <person name="Venselaar H."/>
            <person name="Kawar M.N."/>
            <person name="Tlili A."/>
            <person name="van der Zwaag B."/>
            <person name="Khan S.Y."/>
            <person name="Ayadi L."/>
            <person name="Riazuddin S.A."/>
            <person name="Morell R.J."/>
            <person name="Griffith A.J."/>
            <person name="Charfedine I."/>
            <person name="Caylan R."/>
            <person name="Oostrik J."/>
            <person name="Karaguzel A."/>
            <person name="Ghorbel A."/>
            <person name="Riazuddin S."/>
            <person name="Friedman T.B."/>
            <person name="Ayadi H."/>
            <person name="Kremer H."/>
        </authorList>
    </citation>
    <scope>NUCLEOTIDE SEQUENCE [MRNA] (ISOFORMS 1 AND 2)</scope>
    <source>
        <tissue evidence="6">Brain</tissue>
    </source>
</reference>
<proteinExistence type="evidence at transcript level"/>
<protein>
    <recommendedName>
        <fullName evidence="1">Leucine-rich repeat-containing protein 51</fullName>
    </recommendedName>
    <alternativeName>
        <fullName evidence="4">Protein LRTOMT1</fullName>
    </alternativeName>
</protein>
<gene>
    <name evidence="1" type="primary">LRRC51</name>
    <name evidence="4" type="synonym">LRTOMT</name>
</gene>
<name>LRC51_MACMU</name>
<accession>B6CZ45</accession>
<accession>B6CZ48</accession>
<keyword id="KW-0025">Alternative splicing</keyword>
<keyword id="KW-0963">Cytoplasm</keyword>
<keyword id="KW-0433">Leucine-rich repeat</keyword>
<keyword id="KW-1185">Reference proteome</keyword>
<keyword id="KW-0677">Repeat</keyword>
<dbReference type="EMBL" id="EU627076">
    <property type="protein sequence ID" value="ACF40886.1"/>
    <property type="molecule type" value="mRNA"/>
</dbReference>
<dbReference type="EMBL" id="EU627079">
    <property type="protein sequence ID" value="ACF40889.1"/>
    <property type="molecule type" value="mRNA"/>
</dbReference>
<dbReference type="RefSeq" id="NP_001186283.1">
    <molecule id="B6CZ45-1"/>
    <property type="nucleotide sequence ID" value="NM_001199354.1"/>
</dbReference>
<dbReference type="RefSeq" id="XP_014970531.1">
    <molecule id="B6CZ45-1"/>
    <property type="nucleotide sequence ID" value="XM_015115045.1"/>
</dbReference>
<dbReference type="RefSeq" id="XP_014970532.1">
    <molecule id="B6CZ45-1"/>
    <property type="nucleotide sequence ID" value="XM_015115046.1"/>
</dbReference>
<dbReference type="RefSeq" id="XP_014970533.1">
    <molecule id="B6CZ45-1"/>
    <property type="nucleotide sequence ID" value="XM_015115047.1"/>
</dbReference>
<dbReference type="RefSeq" id="XP_014970534.1">
    <molecule id="B6CZ45-1"/>
    <property type="nucleotide sequence ID" value="XM_015115048.1"/>
</dbReference>
<dbReference type="RefSeq" id="XP_014970535.1">
    <molecule id="B6CZ45-1"/>
    <property type="nucleotide sequence ID" value="XM_015115049.1"/>
</dbReference>
<dbReference type="SMR" id="B6CZ45"/>
<dbReference type="FunCoup" id="B6CZ45">
    <property type="interactions" value="216"/>
</dbReference>
<dbReference type="PaxDb" id="9544-ENSMMUP00000028021"/>
<dbReference type="Ensembl" id="ENSMMUT00000057173.2">
    <molecule id="B6CZ45-1"/>
    <property type="protein sequence ID" value="ENSMMUP00000057813.2"/>
    <property type="gene ID" value="ENSMMUG00000021280.4"/>
</dbReference>
<dbReference type="GeneID" id="718286"/>
<dbReference type="KEGG" id="mcc:718286"/>
<dbReference type="CTD" id="220074"/>
<dbReference type="VEuPathDB" id="HostDB:ENSMMUG00000021280"/>
<dbReference type="eggNOG" id="KOG1644">
    <property type="taxonomic scope" value="Eukaryota"/>
</dbReference>
<dbReference type="GeneTree" id="ENSGT00940000161220"/>
<dbReference type="HOGENOM" id="CLU_095080_1_1_1"/>
<dbReference type="InParanoid" id="B6CZ45"/>
<dbReference type="OrthoDB" id="186626at2759"/>
<dbReference type="TreeFam" id="TF329158"/>
<dbReference type="Proteomes" id="UP000006718">
    <property type="component" value="Chromosome 14"/>
</dbReference>
<dbReference type="Bgee" id="ENSMMUG00000021280">
    <property type="expression patterns" value="Expressed in spermatid and 20 other cell types or tissues"/>
</dbReference>
<dbReference type="ExpressionAtlas" id="B6CZ45">
    <property type="expression patterns" value="baseline"/>
</dbReference>
<dbReference type="GO" id="GO:0005930">
    <property type="term" value="C:axoneme"/>
    <property type="evidence" value="ECO:0000318"/>
    <property type="project" value="GO_Central"/>
</dbReference>
<dbReference type="Gene3D" id="3.80.10.10">
    <property type="entry name" value="Ribonuclease Inhibitor"/>
    <property type="match status" value="1"/>
</dbReference>
<dbReference type="InterPro" id="IPR001611">
    <property type="entry name" value="Leu-rich_rpt"/>
</dbReference>
<dbReference type="InterPro" id="IPR032675">
    <property type="entry name" value="LRR_dom_sf"/>
</dbReference>
<dbReference type="PANTHER" id="PTHR46545">
    <property type="entry name" value="LEUCINE-RICH REPEAT-CONTAINING PROTEIN 51"/>
    <property type="match status" value="1"/>
</dbReference>
<dbReference type="PANTHER" id="PTHR46545:SF1">
    <property type="entry name" value="LEUCINE-RICH REPEAT-CONTAINING PROTEIN 51"/>
    <property type="match status" value="1"/>
</dbReference>
<dbReference type="Pfam" id="PF14580">
    <property type="entry name" value="LRR_9"/>
    <property type="match status" value="1"/>
</dbReference>
<dbReference type="SUPFAM" id="SSF52075">
    <property type="entry name" value="Outer arm dynein light chain 1"/>
    <property type="match status" value="1"/>
</dbReference>
<dbReference type="PROSITE" id="PS51450">
    <property type="entry name" value="LRR"/>
    <property type="match status" value="4"/>
</dbReference>
<comment type="subcellular location">
    <subcellularLocation>
        <location evidence="2">Cytoplasm</location>
    </subcellularLocation>
</comment>
<comment type="alternative products">
    <event type="alternative splicing"/>
    <isoform>
        <id>B6CZ45-1</id>
        <name evidence="3">1</name>
        <name evidence="3">A</name>
        <sequence type="displayed"/>
    </isoform>
    <isoform>
        <id>B6CZ45-2</id>
        <name evidence="3">2</name>
        <name evidence="3">D</name>
        <sequence type="described" ref="VSP_053060"/>
    </isoform>
</comment>
<comment type="miscellaneous">
    <text evidence="4">LRRC51 and TOMT were originally considered as alternative reading frames, LRTOMT1 and LRTOMT2 of the same LRTOMT gene in primates.</text>
</comment>